<name>BAIG_CLOSV</name>
<organism>
    <name type="scientific">Clostridium scindens (strain JCM 10418 / VPI 12708)</name>
    <dbReference type="NCBI Taxonomy" id="29347"/>
    <lineage>
        <taxon>Bacteria</taxon>
        <taxon>Bacillati</taxon>
        <taxon>Bacillota</taxon>
        <taxon>Clostridia</taxon>
        <taxon>Lachnospirales</taxon>
        <taxon>Lachnospiraceae</taxon>
    </lineage>
</organism>
<gene>
    <name type="primary">baiG</name>
</gene>
<evidence type="ECO:0000255" key="1"/>
<evidence type="ECO:0000305" key="2"/>
<comment type="pathway">
    <text>Lipid metabolism; bile acid degradation.</text>
</comment>
<comment type="subcellular location">
    <subcellularLocation>
        <location evidence="2">Cell membrane</location>
        <topology evidence="2">Multi-pass membrane protein</topology>
    </subcellularLocation>
</comment>
<comment type="similarity">
    <text evidence="2">Belongs to the major facilitator superfamily.</text>
</comment>
<reference key="1">
    <citation type="submission" date="1996-06" db="EMBL/GenBank/DDBJ databases">
        <authorList>
            <person name="Mallonee D.H."/>
            <person name="Hylemon P.B."/>
        </authorList>
    </citation>
    <scope>NUCLEOTIDE SEQUENCE [GENOMIC DNA]</scope>
</reference>
<reference key="2">
    <citation type="journal article" date="1993" name="J. Bacteriol.">
        <title>Characterization of the baiH gene encoding a bile acid-inducible NADH:flavin oxidoreductase from Eubacterium sp. strain VPI 12708.</title>
        <authorList>
            <person name="Franklund C.V."/>
            <person name="Baron S.F."/>
            <person name="Hylemon P.B."/>
        </authorList>
    </citation>
    <scope>NUCLEOTIDE SEQUENCE [GENOMIC DNA] OF 266-477</scope>
</reference>
<dbReference type="EMBL" id="U57489">
    <property type="protein sequence ID" value="AAC45416.1"/>
    <property type="molecule type" value="Genomic_DNA"/>
</dbReference>
<dbReference type="PIR" id="A36912">
    <property type="entry name" value="A36912"/>
</dbReference>
<dbReference type="RefSeq" id="WP_025645816.1">
    <property type="nucleotide sequence ID" value="NZ_CANSEQ010000038.1"/>
</dbReference>
<dbReference type="SMR" id="P32369"/>
<dbReference type="TCDB" id="2.A.1.3.13">
    <property type="family name" value="the major facilitator superfamily (mfs)"/>
</dbReference>
<dbReference type="UniPathway" id="UPA00279"/>
<dbReference type="GO" id="GO:0016020">
    <property type="term" value="C:membrane"/>
    <property type="evidence" value="ECO:0000305"/>
    <property type="project" value="UniProt"/>
</dbReference>
<dbReference type="GO" id="GO:0005886">
    <property type="term" value="C:plasma membrane"/>
    <property type="evidence" value="ECO:0007669"/>
    <property type="project" value="UniProtKB-SubCell"/>
</dbReference>
<dbReference type="GO" id="GO:0015125">
    <property type="term" value="F:bile acid transmembrane transporter activity"/>
    <property type="evidence" value="ECO:0000314"/>
    <property type="project" value="UniProt"/>
</dbReference>
<dbReference type="GO" id="GO:0015721">
    <property type="term" value="P:bile acid and bile salt transport"/>
    <property type="evidence" value="ECO:0000314"/>
    <property type="project" value="UniProt"/>
</dbReference>
<dbReference type="GO" id="GO:0030573">
    <property type="term" value="P:bile acid catabolic process"/>
    <property type="evidence" value="ECO:0007669"/>
    <property type="project" value="UniProtKB-UniPathway"/>
</dbReference>
<dbReference type="GO" id="GO:0016042">
    <property type="term" value="P:lipid catabolic process"/>
    <property type="evidence" value="ECO:0007669"/>
    <property type="project" value="UniProtKB-KW"/>
</dbReference>
<dbReference type="CDD" id="cd17321">
    <property type="entry name" value="MFS_MMR_MDR_like"/>
    <property type="match status" value="1"/>
</dbReference>
<dbReference type="Gene3D" id="1.20.1250.20">
    <property type="entry name" value="MFS general substrate transporter like domains"/>
    <property type="match status" value="2"/>
</dbReference>
<dbReference type="InterPro" id="IPR011701">
    <property type="entry name" value="MFS"/>
</dbReference>
<dbReference type="InterPro" id="IPR020846">
    <property type="entry name" value="MFS_dom"/>
</dbReference>
<dbReference type="InterPro" id="IPR036259">
    <property type="entry name" value="MFS_trans_sf"/>
</dbReference>
<dbReference type="PANTHER" id="PTHR42718">
    <property type="entry name" value="MAJOR FACILITATOR SUPERFAMILY MULTIDRUG TRANSPORTER MFSC"/>
    <property type="match status" value="1"/>
</dbReference>
<dbReference type="PANTHER" id="PTHR42718:SF9">
    <property type="entry name" value="MAJOR FACILITATOR SUPERFAMILY MULTIDRUG TRANSPORTER MFSC"/>
    <property type="match status" value="1"/>
</dbReference>
<dbReference type="Pfam" id="PF07690">
    <property type="entry name" value="MFS_1"/>
    <property type="match status" value="1"/>
</dbReference>
<dbReference type="SUPFAM" id="SSF103473">
    <property type="entry name" value="MFS general substrate transporter"/>
    <property type="match status" value="2"/>
</dbReference>
<dbReference type="PROSITE" id="PS50850">
    <property type="entry name" value="MFS"/>
    <property type="match status" value="1"/>
</dbReference>
<accession>P32369</accession>
<accession>Q47873</accession>
<feature type="chain" id="PRO_0000173314" description="Bile acid transporter">
    <location>
        <begin position="1"/>
        <end position="477"/>
    </location>
</feature>
<feature type="transmembrane region" description="Helical" evidence="1">
    <location>
        <begin position="13"/>
        <end position="33"/>
    </location>
</feature>
<feature type="transmembrane region" description="Helical" evidence="1">
    <location>
        <begin position="50"/>
        <end position="70"/>
    </location>
</feature>
<feature type="transmembrane region" description="Helical" evidence="1">
    <location>
        <begin position="83"/>
        <end position="103"/>
    </location>
</feature>
<feature type="transmembrane region" description="Helical" evidence="1">
    <location>
        <begin position="107"/>
        <end position="127"/>
    </location>
</feature>
<feature type="transmembrane region" description="Helical" evidence="1">
    <location>
        <begin position="139"/>
        <end position="159"/>
    </location>
</feature>
<feature type="transmembrane region" description="Helical" evidence="1">
    <location>
        <begin position="166"/>
        <end position="186"/>
    </location>
</feature>
<feature type="transmembrane region" description="Helical" evidence="1">
    <location>
        <begin position="206"/>
        <end position="226"/>
    </location>
</feature>
<feature type="transmembrane region" description="Helical" evidence="1">
    <location>
        <begin position="228"/>
        <end position="248"/>
    </location>
</feature>
<feature type="transmembrane region" description="Helical" evidence="1">
    <location>
        <begin position="272"/>
        <end position="292"/>
    </location>
</feature>
<feature type="transmembrane region" description="Helical" evidence="1">
    <location>
        <begin position="301"/>
        <end position="321"/>
    </location>
</feature>
<feature type="transmembrane region" description="Helical" evidence="1">
    <location>
        <begin position="333"/>
        <end position="353"/>
    </location>
</feature>
<feature type="transmembrane region" description="Helical" evidence="1">
    <location>
        <begin position="359"/>
        <end position="379"/>
    </location>
</feature>
<feature type="transmembrane region" description="Helical" evidence="1">
    <location>
        <begin position="381"/>
        <end position="401"/>
    </location>
</feature>
<feature type="transmembrane region" description="Helical" evidence="1">
    <location>
        <begin position="406"/>
        <end position="426"/>
    </location>
</feature>
<feature type="transmembrane region" description="Helical" evidence="1">
    <location>
        <begin position="444"/>
        <end position="464"/>
    </location>
</feature>
<feature type="sequence conflict" description="In Ref. 2." evidence="2" ref="2">
    <original>A</original>
    <variation>T</variation>
    <location>
        <position position="442"/>
    </location>
</feature>
<keyword id="KW-0088">Bile acid catabolism</keyword>
<keyword id="KW-1003">Cell membrane</keyword>
<keyword id="KW-0442">Lipid degradation</keyword>
<keyword id="KW-0443">Lipid metabolism</keyword>
<keyword id="KW-0472">Membrane</keyword>
<keyword id="KW-0753">Steroid metabolism</keyword>
<keyword id="KW-0812">Transmembrane</keyword>
<keyword id="KW-1133">Transmembrane helix</keyword>
<keyword id="KW-0813">Transport</keyword>
<sequence length="477" mass="49938">MSTVANPNYKKGFVPFAIAALLVSLIGGFTAVLGPAFVADQGIDYNNTTWISLALAMSSAACAPILGKLGDVLGRRTTLLLGIVIFAAGNVLTAVATSLIFMLAARFIVGIGTAAISPIVMAYIVTEYPQEETGKAFGLYMLISSGAVVVGPTCGGLIMNAAGWRVMMWVCVALCVVVFLICTFSIKKTAFEKKSMAGFDKPGAALVVVFFSLFLCIPSFGQNIGWSSTAFIAAAAVALVALFILVMVEKKAKSPIMNGKFMARKEFVLPVLILFLTQGLMMANMTNVIVFVRYTQPDNVIISSFAISIMYIGMSLGSVIIGPVADKKEPKTVLTFSLVLTAIGCALMYLFKADSSVAIFAASLGILGFGLGGNATIFMKVALSGLSSEVAGSGTGTYGLFRDISAPFGVAVFVPMFANGVTANIAKYASGGMEEGAATVKAAISSIQTLTLVELGCIVVGIILVRMLPRIYQKKEA</sequence>
<proteinExistence type="inferred from homology"/>
<protein>
    <recommendedName>
        <fullName>Bile acid transporter</fullName>
    </recommendedName>
</protein>